<protein>
    <recommendedName>
        <fullName evidence="8">Two-component response regulator ORR11</fullName>
    </recommendedName>
    <alternativeName>
        <fullName evidence="6">OsRR11</fullName>
    </alternativeName>
    <alternativeName>
        <fullName evidence="5">OsRRA8</fullName>
    </alternativeName>
</protein>
<dbReference type="EMBL" id="BR000318">
    <property type="protein sequence ID" value="FAA00270.1"/>
    <property type="molecule type" value="Genomic_DNA"/>
</dbReference>
<dbReference type="EMBL" id="AB249656">
    <property type="protein sequence ID" value="BAE79350.1"/>
    <property type="molecule type" value="mRNA"/>
</dbReference>
<dbReference type="EMBL" id="AP006452">
    <property type="protein sequence ID" value="BAD26481.1"/>
    <property type="molecule type" value="Genomic_DNA"/>
</dbReference>
<dbReference type="EMBL" id="AP008208">
    <property type="protein sequence ID" value="BAF09415.1"/>
    <property type="molecule type" value="Genomic_DNA"/>
</dbReference>
<dbReference type="EMBL" id="AP014958">
    <property type="protein sequence ID" value="BAS79907.1"/>
    <property type="molecule type" value="Genomic_DNA"/>
</dbReference>
<dbReference type="EMBL" id="CM000139">
    <property type="protein sequence ID" value="EEE57421.1"/>
    <property type="molecule type" value="Genomic_DNA"/>
</dbReference>
<dbReference type="RefSeq" id="XP_015624257.1">
    <property type="nucleotide sequence ID" value="XM_015768771.1"/>
</dbReference>
<dbReference type="SMR" id="Q6H468"/>
<dbReference type="FunCoup" id="Q6H468">
    <property type="interactions" value="28"/>
</dbReference>
<dbReference type="STRING" id="39947.Q6H468"/>
<dbReference type="PaxDb" id="39947-Q6H468"/>
<dbReference type="EnsemblPlants" id="Os02t0631700-01">
    <property type="protein sequence ID" value="Os02t0631700-01"/>
    <property type="gene ID" value="Os02g0631700"/>
</dbReference>
<dbReference type="Gramene" id="Os02t0631700-01">
    <property type="protein sequence ID" value="Os02t0631700-01"/>
    <property type="gene ID" value="Os02g0631700"/>
</dbReference>
<dbReference type="KEGG" id="dosa:Os02g0631700"/>
<dbReference type="eggNOG" id="KOG1601">
    <property type="taxonomic scope" value="Eukaryota"/>
</dbReference>
<dbReference type="HOGENOM" id="CLU_000445_69_5_1"/>
<dbReference type="InParanoid" id="Q6H468"/>
<dbReference type="OMA" id="YIAAMVE"/>
<dbReference type="OrthoDB" id="60033at2759"/>
<dbReference type="Proteomes" id="UP000000763">
    <property type="component" value="Chromosome 2"/>
</dbReference>
<dbReference type="Proteomes" id="UP000007752">
    <property type="component" value="Chromosome 2"/>
</dbReference>
<dbReference type="Proteomes" id="UP000059680">
    <property type="component" value="Chromosome 2"/>
</dbReference>
<dbReference type="GO" id="GO:0009736">
    <property type="term" value="P:cytokinin-activated signaling pathway"/>
    <property type="evidence" value="ECO:0007669"/>
    <property type="project" value="UniProtKB-KW"/>
</dbReference>
<dbReference type="GO" id="GO:0000160">
    <property type="term" value="P:phosphorelay signal transduction system"/>
    <property type="evidence" value="ECO:0007669"/>
    <property type="project" value="UniProtKB-KW"/>
</dbReference>
<dbReference type="CDD" id="cd17581">
    <property type="entry name" value="REC_typeA_ARR"/>
    <property type="match status" value="1"/>
</dbReference>
<dbReference type="FunFam" id="3.40.50.2300:FF:000159">
    <property type="entry name" value="Two-component response regulator ORR5"/>
    <property type="match status" value="1"/>
</dbReference>
<dbReference type="Gene3D" id="3.40.50.2300">
    <property type="match status" value="1"/>
</dbReference>
<dbReference type="InterPro" id="IPR045279">
    <property type="entry name" value="ARR-like"/>
</dbReference>
<dbReference type="InterPro" id="IPR011006">
    <property type="entry name" value="CheY-like_superfamily"/>
</dbReference>
<dbReference type="InterPro" id="IPR001789">
    <property type="entry name" value="Sig_transdc_resp-reg_receiver"/>
</dbReference>
<dbReference type="PANTHER" id="PTHR43874">
    <property type="entry name" value="TWO-COMPONENT RESPONSE REGULATOR"/>
    <property type="match status" value="1"/>
</dbReference>
<dbReference type="PANTHER" id="PTHR43874:SF74">
    <property type="entry name" value="TWO-COMPONENT RESPONSE REGULATOR ORR11"/>
    <property type="match status" value="1"/>
</dbReference>
<dbReference type="Pfam" id="PF00072">
    <property type="entry name" value="Response_reg"/>
    <property type="match status" value="1"/>
</dbReference>
<dbReference type="SMART" id="SM00448">
    <property type="entry name" value="REC"/>
    <property type="match status" value="1"/>
</dbReference>
<dbReference type="SUPFAM" id="SSF52172">
    <property type="entry name" value="CheY-like"/>
    <property type="match status" value="1"/>
</dbReference>
<dbReference type="PROSITE" id="PS50110">
    <property type="entry name" value="RESPONSE_REGULATORY"/>
    <property type="match status" value="1"/>
</dbReference>
<evidence type="ECO:0000250" key="1">
    <source>
        <dbReference type="UniProtKB" id="Q9ZWS9"/>
    </source>
</evidence>
<evidence type="ECO:0000255" key="2">
    <source>
        <dbReference type="PROSITE-ProRule" id="PRU00169"/>
    </source>
</evidence>
<evidence type="ECO:0000269" key="3">
    <source>
    </source>
</evidence>
<evidence type="ECO:0000269" key="4">
    <source>
    </source>
</evidence>
<evidence type="ECO:0000303" key="5">
    <source>
    </source>
</evidence>
<evidence type="ECO:0000303" key="6">
    <source>
    </source>
</evidence>
<evidence type="ECO:0000303" key="7">
    <source>
    </source>
</evidence>
<evidence type="ECO:0000305" key="8"/>
<evidence type="ECO:0000312" key="9">
    <source>
        <dbReference type="EMBL" id="BAD26481.1"/>
    </source>
</evidence>
<evidence type="ECO:0000312" key="10">
    <source>
        <dbReference type="EMBL" id="BAF09415.1"/>
    </source>
</evidence>
<evidence type="ECO:0000312" key="11">
    <source>
        <dbReference type="EMBL" id="EEE57421.1"/>
    </source>
</evidence>
<gene>
    <name evidence="7" type="primary">RR11</name>
    <name evidence="10" type="ordered locus">Os02g0631700</name>
    <name evidence="8" type="ordered locus">LOC_Os02g42060</name>
    <name evidence="9" type="ORF">B1250G12.17</name>
    <name evidence="11" type="ORF">OsJ_07618</name>
</gene>
<keyword id="KW-0932">Cytokinin signaling pathway</keyword>
<keyword id="KW-0597">Phosphoprotein</keyword>
<keyword id="KW-1185">Reference proteome</keyword>
<keyword id="KW-0804">Transcription</keyword>
<keyword id="KW-0805">Transcription regulation</keyword>
<keyword id="KW-0902">Two-component regulatory system</keyword>
<comment type="function">
    <text evidence="1">Functions as a response regulator involved in His-to-Asp phosphorelay signal transduction system. Phosphorylation of the Asp residue in the receiver domain activates the ability of the protein to promote the transcription of target genes. Type-A response regulators seem to act as negative regulators of the cytokinin signaling.</text>
</comment>
<comment type="induction">
    <text evidence="4">By cytokinin in shoots.</text>
</comment>
<comment type="PTM">
    <text evidence="8">Two-component system major event consists of a His-to-Asp phosphorelay between a sensor histidine kinase (HK) and a response regulator (RR). In plants, the His-to-Asp phosphorelay involves an additional intermediate named Histidine-containing phosphotransfer protein (HPt). This multistep phosphorelay consists of a His-Asp-His-Asp sequential transfer of a phosphate group between first a His and an Asp of the HK protein, followed by the transfer to a conserved His of the HPt protein and finally the transfer to an Asp in the receiver domain of the RR protein.</text>
</comment>
<comment type="disruption phenotype">
    <text evidence="3">Dwarf, narrow leaf and low tillering phenotypes.</text>
</comment>
<comment type="similarity">
    <text evidence="8">Belongs to the ARR family. Type-A subfamily.</text>
</comment>
<proteinExistence type="evidence at transcript level"/>
<name>ORR11_ORYSJ</name>
<organism>
    <name type="scientific">Oryza sativa subsp. japonica</name>
    <name type="common">Rice</name>
    <dbReference type="NCBI Taxonomy" id="39947"/>
    <lineage>
        <taxon>Eukaryota</taxon>
        <taxon>Viridiplantae</taxon>
        <taxon>Streptophyta</taxon>
        <taxon>Embryophyta</taxon>
        <taxon>Tracheophyta</taxon>
        <taxon>Spermatophyta</taxon>
        <taxon>Magnoliopsida</taxon>
        <taxon>Liliopsida</taxon>
        <taxon>Poales</taxon>
        <taxon>Poaceae</taxon>
        <taxon>BOP clade</taxon>
        <taxon>Oryzoideae</taxon>
        <taxon>Oryzeae</taxon>
        <taxon>Oryzinae</taxon>
        <taxon>Oryza</taxon>
        <taxon>Oryza sativa</taxon>
    </lineage>
</organism>
<sequence>MSSIGAGAGGAVVGAAVAAVAVGGGAPPHVLAVDDSSVDRAVIAGILRSSRFRVTAVDSGKRALELLGSEPNVSMIITDYWMPEMTGYELLKKVKESSKLKKIPVVIMSSENVPTRISRCLEEGAEDFLVKPVRPSDVSRLFSRVLP</sequence>
<reference key="1">
    <citation type="journal article" date="2006" name="Gene">
        <title>Identification and characterization of cytokinin-signalling gene families in rice.</title>
        <authorList>
            <person name="Ito Y."/>
            <person name="Kurata N."/>
        </authorList>
    </citation>
    <scope>NUCLEOTIDE SEQUENCE [GENOMIC DNA]</scope>
    <source>
        <strain>cv. Nipponbare</strain>
    </source>
</reference>
<reference key="2">
    <citation type="journal article" date="2007" name="Plant Cell Physiol.">
        <title>Overexpression of a type-A response regulator alters rice morphology and cytokinin metabolism.</title>
        <authorList>
            <person name="Hirose N."/>
            <person name="Makita N."/>
            <person name="Kojima M."/>
            <person name="Kamada-Nobusada T."/>
            <person name="Sakakibara H."/>
        </authorList>
    </citation>
    <scope>NUCLEOTIDE SEQUENCE [MRNA]</scope>
    <source>
        <strain>cv. Nipponbare</strain>
    </source>
</reference>
<reference key="3">
    <citation type="journal article" date="2005" name="Nature">
        <title>The map-based sequence of the rice genome.</title>
        <authorList>
            <consortium name="International rice genome sequencing project (IRGSP)"/>
        </authorList>
    </citation>
    <scope>NUCLEOTIDE SEQUENCE [LARGE SCALE GENOMIC DNA]</scope>
    <source>
        <strain>cv. Nipponbare</strain>
    </source>
</reference>
<reference key="4">
    <citation type="journal article" date="2008" name="Nucleic Acids Res.">
        <title>The rice annotation project database (RAP-DB): 2008 update.</title>
        <authorList>
            <consortium name="The rice annotation project (RAP)"/>
        </authorList>
    </citation>
    <scope>GENOME REANNOTATION</scope>
    <source>
        <strain>cv. Nipponbare</strain>
    </source>
</reference>
<reference key="5">
    <citation type="journal article" date="2013" name="Rice">
        <title>Improvement of the Oryza sativa Nipponbare reference genome using next generation sequence and optical map data.</title>
        <authorList>
            <person name="Kawahara Y."/>
            <person name="de la Bastide M."/>
            <person name="Hamilton J.P."/>
            <person name="Kanamori H."/>
            <person name="McCombie W.R."/>
            <person name="Ouyang S."/>
            <person name="Schwartz D.C."/>
            <person name="Tanaka T."/>
            <person name="Wu J."/>
            <person name="Zhou S."/>
            <person name="Childs K.L."/>
            <person name="Davidson R.M."/>
            <person name="Lin H."/>
            <person name="Quesada-Ocampo L."/>
            <person name="Vaillancourt B."/>
            <person name="Sakai H."/>
            <person name="Lee S.S."/>
            <person name="Kim J."/>
            <person name="Numa H."/>
            <person name="Itoh T."/>
            <person name="Buell C.R."/>
            <person name="Matsumoto T."/>
        </authorList>
    </citation>
    <scope>GENOME REANNOTATION</scope>
    <source>
        <strain>cv. Nipponbare</strain>
    </source>
</reference>
<reference key="6">
    <citation type="journal article" date="2005" name="PLoS Biol.">
        <title>The genomes of Oryza sativa: a history of duplications.</title>
        <authorList>
            <person name="Yu J."/>
            <person name="Wang J."/>
            <person name="Lin W."/>
            <person name="Li S."/>
            <person name="Li H."/>
            <person name="Zhou J."/>
            <person name="Ni P."/>
            <person name="Dong W."/>
            <person name="Hu S."/>
            <person name="Zeng C."/>
            <person name="Zhang J."/>
            <person name="Zhang Y."/>
            <person name="Li R."/>
            <person name="Xu Z."/>
            <person name="Li S."/>
            <person name="Li X."/>
            <person name="Zheng H."/>
            <person name="Cong L."/>
            <person name="Lin L."/>
            <person name="Yin J."/>
            <person name="Geng J."/>
            <person name="Li G."/>
            <person name="Shi J."/>
            <person name="Liu J."/>
            <person name="Lv H."/>
            <person name="Li J."/>
            <person name="Wang J."/>
            <person name="Deng Y."/>
            <person name="Ran L."/>
            <person name="Shi X."/>
            <person name="Wang X."/>
            <person name="Wu Q."/>
            <person name="Li C."/>
            <person name="Ren X."/>
            <person name="Wang J."/>
            <person name="Wang X."/>
            <person name="Li D."/>
            <person name="Liu D."/>
            <person name="Zhang X."/>
            <person name="Ji Z."/>
            <person name="Zhao W."/>
            <person name="Sun Y."/>
            <person name="Zhang Z."/>
            <person name="Bao J."/>
            <person name="Han Y."/>
            <person name="Dong L."/>
            <person name="Ji J."/>
            <person name="Chen P."/>
            <person name="Wu S."/>
            <person name="Liu J."/>
            <person name="Xiao Y."/>
            <person name="Bu D."/>
            <person name="Tan J."/>
            <person name="Yang L."/>
            <person name="Ye C."/>
            <person name="Zhang J."/>
            <person name="Xu J."/>
            <person name="Zhou Y."/>
            <person name="Yu Y."/>
            <person name="Zhang B."/>
            <person name="Zhuang S."/>
            <person name="Wei H."/>
            <person name="Liu B."/>
            <person name="Lei M."/>
            <person name="Yu H."/>
            <person name="Li Y."/>
            <person name="Xu H."/>
            <person name="Wei S."/>
            <person name="He X."/>
            <person name="Fang L."/>
            <person name="Zhang Z."/>
            <person name="Zhang Y."/>
            <person name="Huang X."/>
            <person name="Su Z."/>
            <person name="Tong W."/>
            <person name="Li J."/>
            <person name="Tong Z."/>
            <person name="Li S."/>
            <person name="Ye J."/>
            <person name="Wang L."/>
            <person name="Fang L."/>
            <person name="Lei T."/>
            <person name="Chen C.-S."/>
            <person name="Chen H.-C."/>
            <person name="Xu Z."/>
            <person name="Li H."/>
            <person name="Huang H."/>
            <person name="Zhang F."/>
            <person name="Xu H."/>
            <person name="Li N."/>
            <person name="Zhao C."/>
            <person name="Li S."/>
            <person name="Dong L."/>
            <person name="Huang Y."/>
            <person name="Li L."/>
            <person name="Xi Y."/>
            <person name="Qi Q."/>
            <person name="Li W."/>
            <person name="Zhang B."/>
            <person name="Hu W."/>
            <person name="Zhang Y."/>
            <person name="Tian X."/>
            <person name="Jiao Y."/>
            <person name="Liang X."/>
            <person name="Jin J."/>
            <person name="Gao L."/>
            <person name="Zheng W."/>
            <person name="Hao B."/>
            <person name="Liu S.-M."/>
            <person name="Wang W."/>
            <person name="Yuan L."/>
            <person name="Cao M."/>
            <person name="McDermott J."/>
            <person name="Samudrala R."/>
            <person name="Wang J."/>
            <person name="Wong G.K.-S."/>
            <person name="Yang H."/>
        </authorList>
    </citation>
    <scope>NUCLEOTIDE SEQUENCE [LARGE SCALE GENOMIC DNA]</scope>
    <source>
        <strain>cv. Nipponbare</strain>
    </source>
</reference>
<reference key="7">
    <citation type="journal article" date="2006" name="Plant Physiol.">
        <title>Whole-genome analysis of Oryza sativa reveals similar architecture of two-component signaling machinery with Arabidopsis.</title>
        <authorList>
            <person name="Pareek A."/>
            <person name="Singh A."/>
            <person name="Kumar M."/>
            <person name="Kushwaha H.R."/>
            <person name="Lynn A.M."/>
            <person name="Singla-Pareek S.L."/>
        </authorList>
    </citation>
    <scope>DISRUPTION PHENOTYPE</scope>
</reference>
<reference key="8">
    <citation type="journal article" date="2007" name="Plant Physiol.">
        <title>Nomenclature for two-component signaling elements of rice.</title>
        <authorList>
            <person name="Schaller G.E."/>
            <person name="Doi K."/>
            <person name="Hwang I."/>
            <person name="Kieber J.J."/>
            <person name="Khurana J.P."/>
            <person name="Kurata N."/>
            <person name="Mizuno T."/>
            <person name="Pareek A."/>
            <person name="Shiu S.H."/>
            <person name="Wu P."/>
            <person name="Yip W.K."/>
        </authorList>
    </citation>
    <scope>GENE FAMILY</scope>
    <scope>NOMENCLATURE</scope>
</reference>
<reference key="9">
    <citation type="journal article" date="2012" name="Plant Physiol.">
        <title>Characterization of genes involved in cytokinin signaling and metabolism from rice.</title>
        <authorList>
            <person name="Tsai Y.C."/>
            <person name="Weir N.R."/>
            <person name="Hill K."/>
            <person name="Zhang W."/>
            <person name="Kim H.J."/>
            <person name="Shiu S.H."/>
            <person name="Schaller G.E."/>
            <person name="Kieber J.J."/>
        </authorList>
    </citation>
    <scope>INDUCTION BY CYTOKININ</scope>
</reference>
<accession>Q6H468</accession>
<accession>A0A0P0VM68</accession>
<feature type="chain" id="PRO_0000433836" description="Two-component response regulator ORR11">
    <location>
        <begin position="1"/>
        <end position="147"/>
    </location>
</feature>
<feature type="domain" description="Response regulatory" evidence="2">
    <location>
        <begin position="29"/>
        <end position="146"/>
    </location>
</feature>
<feature type="modified residue" description="4-aspartylphosphate" evidence="2">
    <location>
        <position position="79"/>
    </location>
</feature>